<accession>B6J258</accession>
<comment type="function">
    <text evidence="1">This protein binds specifically to 23S rRNA; its binding is stimulated by other ribosomal proteins, e.g. L4, L17, and L20. It is important during the early stages of 50S assembly. It makes multiple contacts with different domains of the 23S rRNA in the assembled 50S subunit and ribosome (By similarity).</text>
</comment>
<comment type="function">
    <text evidence="1">The globular domain of the protein is located near the polypeptide exit tunnel on the outside of the subunit, while an extended beta-hairpin is found that lines the wall of the exit tunnel in the center of the 70S ribosome.</text>
</comment>
<comment type="subunit">
    <text evidence="1">Part of the 50S ribosomal subunit.</text>
</comment>
<comment type="similarity">
    <text evidence="1">Belongs to the universal ribosomal protein uL22 family.</text>
</comment>
<reference key="1">
    <citation type="journal article" date="2009" name="Infect. Immun.">
        <title>Comparative genomics reveal extensive transposon-mediated genomic plasticity and diversity among potential effector proteins within the genus Coxiella.</title>
        <authorList>
            <person name="Beare P.A."/>
            <person name="Unsworth N."/>
            <person name="Andoh M."/>
            <person name="Voth D.E."/>
            <person name="Omsland A."/>
            <person name="Gilk S.D."/>
            <person name="Williams K.P."/>
            <person name="Sobral B.W."/>
            <person name="Kupko J.J. III"/>
            <person name="Porcella S.F."/>
            <person name="Samuel J.E."/>
            <person name="Heinzen R.A."/>
        </authorList>
    </citation>
    <scope>NUCLEOTIDE SEQUENCE [LARGE SCALE GENOMIC DNA]</scope>
    <source>
        <strain>CbuG_Q212</strain>
    </source>
</reference>
<gene>
    <name evidence="1" type="primary">rplV</name>
    <name type="ordered locus">CbuG_1762</name>
</gene>
<keyword id="KW-0687">Ribonucleoprotein</keyword>
<keyword id="KW-0689">Ribosomal protein</keyword>
<keyword id="KW-0694">RNA-binding</keyword>
<keyword id="KW-0699">rRNA-binding</keyword>
<dbReference type="EMBL" id="CP001019">
    <property type="protein sequence ID" value="ACJ19036.1"/>
    <property type="molecule type" value="Genomic_DNA"/>
</dbReference>
<dbReference type="RefSeq" id="WP_010957457.1">
    <property type="nucleotide sequence ID" value="NC_011527.1"/>
</dbReference>
<dbReference type="SMR" id="B6J258"/>
<dbReference type="KEGG" id="cbg:CbuG_1762"/>
<dbReference type="HOGENOM" id="CLU_083987_3_3_6"/>
<dbReference type="GO" id="GO:0022625">
    <property type="term" value="C:cytosolic large ribosomal subunit"/>
    <property type="evidence" value="ECO:0007669"/>
    <property type="project" value="TreeGrafter"/>
</dbReference>
<dbReference type="GO" id="GO:0019843">
    <property type="term" value="F:rRNA binding"/>
    <property type="evidence" value="ECO:0007669"/>
    <property type="project" value="UniProtKB-UniRule"/>
</dbReference>
<dbReference type="GO" id="GO:0003735">
    <property type="term" value="F:structural constituent of ribosome"/>
    <property type="evidence" value="ECO:0007669"/>
    <property type="project" value="InterPro"/>
</dbReference>
<dbReference type="GO" id="GO:0006412">
    <property type="term" value="P:translation"/>
    <property type="evidence" value="ECO:0007669"/>
    <property type="project" value="UniProtKB-UniRule"/>
</dbReference>
<dbReference type="CDD" id="cd00336">
    <property type="entry name" value="Ribosomal_L22"/>
    <property type="match status" value="1"/>
</dbReference>
<dbReference type="FunFam" id="3.90.470.10:FF:000001">
    <property type="entry name" value="50S ribosomal protein L22"/>
    <property type="match status" value="1"/>
</dbReference>
<dbReference type="Gene3D" id="3.90.470.10">
    <property type="entry name" value="Ribosomal protein L22/L17"/>
    <property type="match status" value="1"/>
</dbReference>
<dbReference type="HAMAP" id="MF_01331_B">
    <property type="entry name" value="Ribosomal_uL22_B"/>
    <property type="match status" value="1"/>
</dbReference>
<dbReference type="InterPro" id="IPR001063">
    <property type="entry name" value="Ribosomal_uL22"/>
</dbReference>
<dbReference type="InterPro" id="IPR005727">
    <property type="entry name" value="Ribosomal_uL22_bac/chlpt-type"/>
</dbReference>
<dbReference type="InterPro" id="IPR047867">
    <property type="entry name" value="Ribosomal_uL22_bac/org-type"/>
</dbReference>
<dbReference type="InterPro" id="IPR018260">
    <property type="entry name" value="Ribosomal_uL22_CS"/>
</dbReference>
<dbReference type="InterPro" id="IPR036394">
    <property type="entry name" value="Ribosomal_uL22_sf"/>
</dbReference>
<dbReference type="NCBIfam" id="TIGR01044">
    <property type="entry name" value="rplV_bact"/>
    <property type="match status" value="1"/>
</dbReference>
<dbReference type="PANTHER" id="PTHR13501">
    <property type="entry name" value="CHLOROPLAST 50S RIBOSOMAL PROTEIN L22-RELATED"/>
    <property type="match status" value="1"/>
</dbReference>
<dbReference type="PANTHER" id="PTHR13501:SF8">
    <property type="entry name" value="LARGE RIBOSOMAL SUBUNIT PROTEIN UL22M"/>
    <property type="match status" value="1"/>
</dbReference>
<dbReference type="Pfam" id="PF00237">
    <property type="entry name" value="Ribosomal_L22"/>
    <property type="match status" value="1"/>
</dbReference>
<dbReference type="SUPFAM" id="SSF54843">
    <property type="entry name" value="Ribosomal protein L22"/>
    <property type="match status" value="1"/>
</dbReference>
<dbReference type="PROSITE" id="PS00464">
    <property type="entry name" value="RIBOSOMAL_L22"/>
    <property type="match status" value="1"/>
</dbReference>
<protein>
    <recommendedName>
        <fullName evidence="1">Large ribosomal subunit protein uL22</fullName>
    </recommendedName>
    <alternativeName>
        <fullName evidence="2">50S ribosomal protein L22</fullName>
    </alternativeName>
</protein>
<evidence type="ECO:0000255" key="1">
    <source>
        <dbReference type="HAMAP-Rule" id="MF_01331"/>
    </source>
</evidence>
<evidence type="ECO:0000305" key="2"/>
<name>RL22_COXB2</name>
<proteinExistence type="inferred from homology"/>
<sequence length="115" mass="12582">MEVAAKLKYARISAQKARLVADQVRGLGAEQAVNLLRFSNKKAAALMKKVLDSAIANAEHNEGADIDELKVSTVMVDEGPSARRFHARARGRANQILKRTCHITVKVSDSQVEND</sequence>
<feature type="chain" id="PRO_1000142248" description="Large ribosomal subunit protein uL22">
    <location>
        <begin position="1"/>
        <end position="115"/>
    </location>
</feature>
<organism>
    <name type="scientific">Coxiella burnetii (strain CbuG_Q212)</name>
    <name type="common">Coxiella burnetii (strain Q212)</name>
    <dbReference type="NCBI Taxonomy" id="434923"/>
    <lineage>
        <taxon>Bacteria</taxon>
        <taxon>Pseudomonadati</taxon>
        <taxon>Pseudomonadota</taxon>
        <taxon>Gammaproteobacteria</taxon>
        <taxon>Legionellales</taxon>
        <taxon>Coxiellaceae</taxon>
        <taxon>Coxiella</taxon>
    </lineage>
</organism>